<name>METC_PAPLA</name>
<organism>
    <name type="scientific">Papiliotrema laurentii</name>
    <name type="common">Cryptococcus laurentii</name>
    <dbReference type="NCBI Taxonomy" id="5418"/>
    <lineage>
        <taxon>Eukaryota</taxon>
        <taxon>Fungi</taxon>
        <taxon>Dikarya</taxon>
        <taxon>Basidiomycota</taxon>
        <taxon>Agaricomycotina</taxon>
        <taxon>Tremellomycetes</taxon>
        <taxon>Tremellales</taxon>
        <taxon>Rhynchogastremaceae</taxon>
        <taxon>Papiliotrema</taxon>
    </lineage>
</organism>
<sequence>HDVYGGDYRITGDDGHS</sequence>
<feature type="chain" id="PRO_0000298774" description="Cystathionine beta lyase">
    <location>
        <begin position="1" status="less than"/>
        <end position="17" status="greater than"/>
    </location>
</feature>
<feature type="non-terminal residue" evidence="4">
    <location>
        <position position="1"/>
    </location>
</feature>
<feature type="non-terminal residue" evidence="4">
    <location>
        <position position="17"/>
    </location>
</feature>
<evidence type="ECO:0000250" key="1">
    <source>
        <dbReference type="UniProtKB" id="A0RIN4"/>
    </source>
</evidence>
<evidence type="ECO:0000255" key="2"/>
<evidence type="ECO:0000269" key="3">
    <source ref="1"/>
</evidence>
<evidence type="ECO:0000303" key="4">
    <source ref="1"/>
</evidence>
<evidence type="ECO:0000305" key="5"/>
<dbReference type="EC" id="4.4.1.13"/>
<dbReference type="UniPathway" id="UPA00051">
    <property type="reaction ID" value="UER00078"/>
</dbReference>
<dbReference type="GO" id="GO:0005737">
    <property type="term" value="C:cytoplasm"/>
    <property type="evidence" value="ECO:0007669"/>
    <property type="project" value="UniProtKB-SubCell"/>
</dbReference>
<dbReference type="GO" id="GO:0047804">
    <property type="term" value="F:cysteine-S-conjugate beta-lyase activity"/>
    <property type="evidence" value="ECO:0007669"/>
    <property type="project" value="UniProtKB-EC"/>
</dbReference>
<dbReference type="GO" id="GO:0009086">
    <property type="term" value="P:methionine biosynthetic process"/>
    <property type="evidence" value="ECO:0007669"/>
    <property type="project" value="UniProtKB-KW"/>
</dbReference>
<proteinExistence type="evidence at protein level"/>
<comment type="catalytic activity">
    <reaction evidence="1">
        <text>L,L-cystathionine + H2O = L-homocysteine + pyruvate + NH4(+)</text>
        <dbReference type="Rhea" id="RHEA:13965"/>
        <dbReference type="ChEBI" id="CHEBI:15361"/>
        <dbReference type="ChEBI" id="CHEBI:15377"/>
        <dbReference type="ChEBI" id="CHEBI:28938"/>
        <dbReference type="ChEBI" id="CHEBI:58161"/>
        <dbReference type="ChEBI" id="CHEBI:58199"/>
    </reaction>
</comment>
<comment type="catalytic activity">
    <reaction>
        <text>an S-substituted L-cysteine + H2O = a thiol + pyruvate + NH4(+)</text>
        <dbReference type="Rhea" id="RHEA:18121"/>
        <dbReference type="ChEBI" id="CHEBI:15361"/>
        <dbReference type="ChEBI" id="CHEBI:15377"/>
        <dbReference type="ChEBI" id="CHEBI:28938"/>
        <dbReference type="ChEBI" id="CHEBI:29256"/>
        <dbReference type="ChEBI" id="CHEBI:58717"/>
        <dbReference type="EC" id="4.4.1.13"/>
    </reaction>
</comment>
<comment type="cofactor">
    <cofactor evidence="1">
        <name>pyridoxal 5'-phosphate</name>
        <dbReference type="ChEBI" id="CHEBI:597326"/>
    </cofactor>
</comment>
<comment type="pathway">
    <text>Amino-acid biosynthesis; L-methionine biosynthesis via de novo pathway; L-homocysteine from L-cystathionine: step 1/1.</text>
</comment>
<comment type="subcellular location">
    <subcellularLocation>
        <location evidence="1">Cytoplasm</location>
    </subcellularLocation>
</comment>
<comment type="similarity">
    <text evidence="2">Belongs to the trans-sulfuration enzymes family.</text>
</comment>
<protein>
    <recommendedName>
        <fullName>Cystathionine beta lyase</fullName>
        <ecNumber>4.4.1.13</ecNumber>
    </recommendedName>
    <alternativeName>
        <fullName>Cysteine-S-conjugate beta-lyase</fullName>
    </alternativeName>
</protein>
<reference evidence="5" key="1">
    <citation type="submission" date="2007-07" db="UniProtKB">
        <title>Functional nitrogenase in Cryptococcus laurentii strain RY1.</title>
        <authorList>
            <person name="Dutta D."/>
            <person name="Gachhui R."/>
        </authorList>
    </citation>
    <scope>PROTEIN SEQUENCE</scope>
    <source>
        <strain evidence="3">RY1</strain>
    </source>
</reference>
<keyword id="KW-0028">Amino-acid biosynthesis</keyword>
<keyword id="KW-0963">Cytoplasm</keyword>
<keyword id="KW-0903">Direct protein sequencing</keyword>
<keyword id="KW-0456">Lyase</keyword>
<keyword id="KW-0486">Methionine biosynthesis</keyword>
<accession>P85217</accession>